<sequence length="99" mass="11109">MMNMQSMMKQAQKLQKQMQVSQEEIANTTFVGKSAQDLVTVEFSGDRTLKSLDIKPDVIDPEDPETLQDMVTDAVNDALSQIEKVTEQKLGKFTKGLPF</sequence>
<name>Y120_LACLA</name>
<reference key="1">
    <citation type="journal article" date="2001" name="Genome Res.">
        <title>The complete genome sequence of the lactic acid bacterium Lactococcus lactis ssp. lactis IL1403.</title>
        <authorList>
            <person name="Bolotin A."/>
            <person name="Wincker P."/>
            <person name="Mauger S."/>
            <person name="Jaillon O."/>
            <person name="Malarme K."/>
            <person name="Weissenbach J."/>
            <person name="Ehrlich S.D."/>
            <person name="Sorokin A."/>
        </authorList>
    </citation>
    <scope>NUCLEOTIDE SEQUENCE [LARGE SCALE GENOMIC DNA]</scope>
    <source>
        <strain>IL1403</strain>
    </source>
</reference>
<dbReference type="EMBL" id="AE005176">
    <property type="protein sequence ID" value="AAK04218.1"/>
    <property type="molecule type" value="Genomic_DNA"/>
</dbReference>
<dbReference type="PIR" id="H86639">
    <property type="entry name" value="H86639"/>
</dbReference>
<dbReference type="RefSeq" id="NP_266276.1">
    <property type="nucleotide sequence ID" value="NC_002662.1"/>
</dbReference>
<dbReference type="RefSeq" id="WP_010905131.1">
    <property type="nucleotide sequence ID" value="NC_002662.1"/>
</dbReference>
<dbReference type="SMR" id="Q9CJ80"/>
<dbReference type="PaxDb" id="272623-L122849"/>
<dbReference type="EnsemblBacteria" id="AAK04218">
    <property type="protein sequence ID" value="AAK04218"/>
    <property type="gene ID" value="L122849"/>
</dbReference>
<dbReference type="KEGG" id="lla:L122849"/>
<dbReference type="PATRIC" id="fig|272623.7.peg.133"/>
<dbReference type="eggNOG" id="COG0718">
    <property type="taxonomic scope" value="Bacteria"/>
</dbReference>
<dbReference type="HOGENOM" id="CLU_140930_1_1_9"/>
<dbReference type="OrthoDB" id="9795263at2"/>
<dbReference type="Proteomes" id="UP000002196">
    <property type="component" value="Chromosome"/>
</dbReference>
<dbReference type="GO" id="GO:0043590">
    <property type="term" value="C:bacterial nucleoid"/>
    <property type="evidence" value="ECO:0007669"/>
    <property type="project" value="UniProtKB-UniRule"/>
</dbReference>
<dbReference type="GO" id="GO:0005829">
    <property type="term" value="C:cytosol"/>
    <property type="evidence" value="ECO:0007669"/>
    <property type="project" value="TreeGrafter"/>
</dbReference>
<dbReference type="GO" id="GO:0003677">
    <property type="term" value="F:DNA binding"/>
    <property type="evidence" value="ECO:0007669"/>
    <property type="project" value="UniProtKB-UniRule"/>
</dbReference>
<dbReference type="Gene3D" id="3.30.1310.10">
    <property type="entry name" value="Nucleoid-associated protein YbaB-like domain"/>
    <property type="match status" value="1"/>
</dbReference>
<dbReference type="HAMAP" id="MF_00274">
    <property type="entry name" value="DNA_YbaB_EbfC"/>
    <property type="match status" value="1"/>
</dbReference>
<dbReference type="InterPro" id="IPR036894">
    <property type="entry name" value="YbaB-like_sf"/>
</dbReference>
<dbReference type="InterPro" id="IPR004401">
    <property type="entry name" value="YbaB/EbfC"/>
</dbReference>
<dbReference type="NCBIfam" id="TIGR00103">
    <property type="entry name" value="DNA_YbaB_EbfC"/>
    <property type="match status" value="1"/>
</dbReference>
<dbReference type="PANTHER" id="PTHR33449">
    <property type="entry name" value="NUCLEOID-ASSOCIATED PROTEIN YBAB"/>
    <property type="match status" value="1"/>
</dbReference>
<dbReference type="PANTHER" id="PTHR33449:SF1">
    <property type="entry name" value="NUCLEOID-ASSOCIATED PROTEIN YBAB"/>
    <property type="match status" value="1"/>
</dbReference>
<dbReference type="Pfam" id="PF02575">
    <property type="entry name" value="YbaB_DNA_bd"/>
    <property type="match status" value="1"/>
</dbReference>
<dbReference type="PIRSF" id="PIRSF004555">
    <property type="entry name" value="UCP004555"/>
    <property type="match status" value="1"/>
</dbReference>
<dbReference type="SUPFAM" id="SSF82607">
    <property type="entry name" value="YbaB-like"/>
    <property type="match status" value="1"/>
</dbReference>
<comment type="function">
    <text evidence="1">Binds to DNA and alters its conformation. May be involved in regulation of gene expression, nucleoid organization and DNA protection.</text>
</comment>
<comment type="subunit">
    <text evidence="1">Homodimer.</text>
</comment>
<comment type="subcellular location">
    <subcellularLocation>
        <location evidence="1">Cytoplasm</location>
        <location evidence="1">Nucleoid</location>
    </subcellularLocation>
</comment>
<comment type="similarity">
    <text evidence="1">Belongs to the YbaB/EbfC family.</text>
</comment>
<evidence type="ECO:0000255" key="1">
    <source>
        <dbReference type="HAMAP-Rule" id="MF_00274"/>
    </source>
</evidence>
<protein>
    <recommendedName>
        <fullName evidence="1">Nucleoid-associated protein LL0120</fullName>
    </recommendedName>
</protein>
<gene>
    <name type="primary">ybcG</name>
    <name type="ordered locus">LL0120</name>
    <name type="ORF">L122849</name>
</gene>
<feature type="chain" id="PRO_0000170401" description="Nucleoid-associated protein LL0120">
    <location>
        <begin position="1"/>
        <end position="99"/>
    </location>
</feature>
<proteinExistence type="inferred from homology"/>
<organism>
    <name type="scientific">Lactococcus lactis subsp. lactis (strain IL1403)</name>
    <name type="common">Streptococcus lactis</name>
    <dbReference type="NCBI Taxonomy" id="272623"/>
    <lineage>
        <taxon>Bacteria</taxon>
        <taxon>Bacillati</taxon>
        <taxon>Bacillota</taxon>
        <taxon>Bacilli</taxon>
        <taxon>Lactobacillales</taxon>
        <taxon>Streptococcaceae</taxon>
        <taxon>Lactococcus</taxon>
    </lineage>
</organism>
<accession>Q9CJ80</accession>
<keyword id="KW-0963">Cytoplasm</keyword>
<keyword id="KW-0238">DNA-binding</keyword>
<keyword id="KW-1185">Reference proteome</keyword>